<accession>P51323</accession>
<keyword id="KW-0150">Chloroplast</keyword>
<keyword id="KW-0472">Membrane</keyword>
<keyword id="KW-0602">Photosynthesis</keyword>
<keyword id="KW-0604">Photosystem II</keyword>
<keyword id="KW-0934">Plastid</keyword>
<keyword id="KW-0793">Thylakoid</keyword>
<keyword id="KW-0812">Transmembrane</keyword>
<keyword id="KW-1133">Transmembrane helix</keyword>
<proteinExistence type="inferred from homology"/>
<evidence type="ECO:0000255" key="1">
    <source>
        <dbReference type="HAMAP-Rule" id="MF_00808"/>
    </source>
</evidence>
<organism>
    <name type="scientific">Porphyra purpurea</name>
    <name type="common">Red seaweed</name>
    <name type="synonym">Ulva purpurea</name>
    <dbReference type="NCBI Taxonomy" id="2787"/>
    <lineage>
        <taxon>Eukaryota</taxon>
        <taxon>Rhodophyta</taxon>
        <taxon>Bangiophyceae</taxon>
        <taxon>Bangiales</taxon>
        <taxon>Bangiaceae</taxon>
        <taxon>Porphyra</taxon>
    </lineage>
</organism>
<feature type="chain" id="PRO_0000217972" description="Photosystem II reaction center protein T">
    <location>
        <begin position="1"/>
        <end position="31"/>
    </location>
</feature>
<feature type="transmembrane region" description="Helical" evidence="1">
    <location>
        <begin position="3"/>
        <end position="23"/>
    </location>
</feature>
<protein>
    <recommendedName>
        <fullName evidence="1">Photosystem II reaction center protein T</fullName>
        <shortName evidence="1">PSII-T</shortName>
    </recommendedName>
</protein>
<name>PSBT_PORPU</name>
<comment type="function">
    <text evidence="1">Found at the monomer-monomer interface of the photosystem II (PS II) dimer, plays a role in assembly and dimerization of PSII. PSII is a light-driven water plastoquinone oxidoreductase, using light energy to abstract electrons from H(2)O, generating a proton gradient subsequently used for ATP formation.</text>
</comment>
<comment type="subunit">
    <text evidence="1">PSII is composed of 1 copy each of membrane proteins PsbA, PsbB, PsbC, PsbD, PsbE, PsbF, PsbH, PsbI, PsbJ, PsbK, PsbL, PsbM, PsbT, PsbX, PsbY, PsbZ, Psb30/Ycf12, at least 3 peripheral proteins of the oxygen-evolving complex and a large number of cofactors. It forms dimeric complexes.</text>
</comment>
<comment type="subcellular location">
    <subcellularLocation>
        <location evidence="1">Plastid</location>
        <location evidence="1">Chloroplast thylakoid membrane</location>
        <topology evidence="1">Single-pass membrane protein</topology>
    </subcellularLocation>
</comment>
<comment type="similarity">
    <text evidence="1">Belongs to the PsbT family.</text>
</comment>
<geneLocation type="chloroplast"/>
<gene>
    <name evidence="1" type="primary">psbT</name>
</gene>
<sequence>MEALVYVFLLTGTLMVIFFAIFFREPPRIAK</sequence>
<reference key="1">
    <citation type="journal article" date="1995" name="Plant Mol. Biol. Rep.">
        <title>Complete nucleotide sequence of the Porphyra purpurea chloroplast genome.</title>
        <authorList>
            <person name="Reith M.E."/>
            <person name="Munholland J."/>
        </authorList>
    </citation>
    <scope>NUCLEOTIDE SEQUENCE [LARGE SCALE GENOMIC DNA]</scope>
    <source>
        <strain>Avonport</strain>
    </source>
</reference>
<dbReference type="EMBL" id="U38804">
    <property type="protein sequence ID" value="AAC08209.1"/>
    <property type="molecule type" value="Genomic_DNA"/>
</dbReference>
<dbReference type="PIR" id="S73244">
    <property type="entry name" value="S73244"/>
</dbReference>
<dbReference type="RefSeq" id="NP_053933.1">
    <property type="nucleotide sequence ID" value="NC_000925.1"/>
</dbReference>
<dbReference type="SMR" id="P51323"/>
<dbReference type="GeneID" id="809952"/>
<dbReference type="GO" id="GO:0009535">
    <property type="term" value="C:chloroplast thylakoid membrane"/>
    <property type="evidence" value="ECO:0007669"/>
    <property type="project" value="UniProtKB-SubCell"/>
</dbReference>
<dbReference type="GO" id="GO:0009539">
    <property type="term" value="C:photosystem II reaction center"/>
    <property type="evidence" value="ECO:0007669"/>
    <property type="project" value="InterPro"/>
</dbReference>
<dbReference type="GO" id="GO:0015979">
    <property type="term" value="P:photosynthesis"/>
    <property type="evidence" value="ECO:0007669"/>
    <property type="project" value="UniProtKB-UniRule"/>
</dbReference>
<dbReference type="HAMAP" id="MF_00808">
    <property type="entry name" value="PSII_PsbT"/>
    <property type="match status" value="1"/>
</dbReference>
<dbReference type="InterPro" id="IPR001743">
    <property type="entry name" value="PSII_PsbT"/>
</dbReference>
<dbReference type="InterPro" id="IPR037268">
    <property type="entry name" value="PSII_PsbT_sf"/>
</dbReference>
<dbReference type="PANTHER" id="PTHR36411">
    <property type="match status" value="1"/>
</dbReference>
<dbReference type="PANTHER" id="PTHR36411:SF2">
    <property type="entry name" value="PHOTOSYSTEM II REACTION CENTER PROTEIN T"/>
    <property type="match status" value="1"/>
</dbReference>
<dbReference type="Pfam" id="PF01405">
    <property type="entry name" value="PsbT"/>
    <property type="match status" value="1"/>
</dbReference>
<dbReference type="SUPFAM" id="SSF161029">
    <property type="entry name" value="Photosystem II reaction center protein T, PsbT"/>
    <property type="match status" value="1"/>
</dbReference>